<sequence length="463" mass="50249">MGRKKIQITRIMDERNRQVTFTKRKFGLMKKAYELSVLCDCEIALIIFNSTNKLFQYASTDMDKVLLKYTEYNEPHESRTNSDIVEALNKKENKGCESPDPDSSYALTPRTEEKYKKINEEFDNMIKSHKIPAVPPPNFEMPVSIPVSSHNSLVYSNPVSSLGNPNFLPLAHPSLQRNSMSPGVTHRPPSAGNTGGLMGGDLTSGAGTSAGNGYGNPRNSPGLLVSPGNLNKNMQAKSPPPMNLGMNNRKPDLRVLIPPGSKNTMPSVSQRINNSQSAQSLATPVVSVATPTLPGQGMGGYPSAISTTYGTEYSLSSADLSSLSGFNTASALHLGSVTGWQQQHLHNMPPSALSQLGACTSTHLSQSSNLSLPSTQSLNIKSEPVSPPRDRTTTPSRYPQHTRHEAGRSPVDSLSSCSSSYDGSDREDHRNEFHSPIGLTRPSPDERESPSVKRMRLSEGWAT</sequence>
<dbReference type="EMBL" id="DQ343149">
    <property type="protein sequence ID" value="ABC68473.1"/>
    <property type="molecule type" value="mRNA"/>
</dbReference>
<dbReference type="EMBL" id="EF486522">
    <property type="protein sequence ID" value="ABO77944.1"/>
    <property type="molecule type" value="mRNA"/>
</dbReference>
<dbReference type="RefSeq" id="NP_001038005.1">
    <property type="nucleotide sequence ID" value="NM_001044540.1"/>
</dbReference>
<dbReference type="SMR" id="A4UTP7"/>
<dbReference type="FunCoup" id="A4UTP7">
    <property type="interactions" value="908"/>
</dbReference>
<dbReference type="STRING" id="9823.ENSSSCP00000015044"/>
<dbReference type="PaxDb" id="9823-ENSSSCP00000015044"/>
<dbReference type="GeneID" id="733590"/>
<dbReference type="KEGG" id="ssc:733590"/>
<dbReference type="CTD" id="4208"/>
<dbReference type="eggNOG" id="KOG0014">
    <property type="taxonomic scope" value="Eukaryota"/>
</dbReference>
<dbReference type="InParanoid" id="A4UTP7"/>
<dbReference type="OrthoDB" id="1898716at2759"/>
<dbReference type="Proteomes" id="UP000008227">
    <property type="component" value="Unplaced"/>
</dbReference>
<dbReference type="Proteomes" id="UP000314985">
    <property type="component" value="Unplaced"/>
</dbReference>
<dbReference type="Proteomes" id="UP000694570">
    <property type="component" value="Unplaced"/>
</dbReference>
<dbReference type="Proteomes" id="UP000694571">
    <property type="component" value="Unplaced"/>
</dbReference>
<dbReference type="Proteomes" id="UP000694720">
    <property type="component" value="Unplaced"/>
</dbReference>
<dbReference type="Proteomes" id="UP000694722">
    <property type="component" value="Unplaced"/>
</dbReference>
<dbReference type="Proteomes" id="UP000694723">
    <property type="component" value="Unplaced"/>
</dbReference>
<dbReference type="Proteomes" id="UP000694724">
    <property type="component" value="Unplaced"/>
</dbReference>
<dbReference type="Proteomes" id="UP000694725">
    <property type="component" value="Unplaced"/>
</dbReference>
<dbReference type="Proteomes" id="UP000694726">
    <property type="component" value="Unplaced"/>
</dbReference>
<dbReference type="Proteomes" id="UP000694727">
    <property type="component" value="Unplaced"/>
</dbReference>
<dbReference type="Proteomes" id="UP000694728">
    <property type="component" value="Unplaced"/>
</dbReference>
<dbReference type="GO" id="GO:0005737">
    <property type="term" value="C:cytoplasm"/>
    <property type="evidence" value="ECO:0000250"/>
    <property type="project" value="UniProtKB"/>
</dbReference>
<dbReference type="GO" id="GO:0016607">
    <property type="term" value="C:nuclear speck"/>
    <property type="evidence" value="ECO:0000250"/>
    <property type="project" value="UniProtKB"/>
</dbReference>
<dbReference type="GO" id="GO:0005634">
    <property type="term" value="C:nucleus"/>
    <property type="evidence" value="ECO:0000250"/>
    <property type="project" value="UniProtKB"/>
</dbReference>
<dbReference type="GO" id="GO:0032991">
    <property type="term" value="C:protein-containing complex"/>
    <property type="evidence" value="ECO:0000250"/>
    <property type="project" value="UniProtKB"/>
</dbReference>
<dbReference type="GO" id="GO:0016528">
    <property type="term" value="C:sarcoplasm"/>
    <property type="evidence" value="ECO:0007669"/>
    <property type="project" value="UniProtKB-SubCell"/>
</dbReference>
<dbReference type="GO" id="GO:0003677">
    <property type="term" value="F:DNA binding"/>
    <property type="evidence" value="ECO:0000250"/>
    <property type="project" value="UniProtKB"/>
</dbReference>
<dbReference type="GO" id="GO:0001228">
    <property type="term" value="F:DNA-binding transcription activator activity, RNA polymerase II-specific"/>
    <property type="evidence" value="ECO:0000250"/>
    <property type="project" value="UniProtKB"/>
</dbReference>
<dbReference type="GO" id="GO:0003700">
    <property type="term" value="F:DNA-binding transcription factor activity"/>
    <property type="evidence" value="ECO:0000250"/>
    <property type="project" value="UniProtKB"/>
</dbReference>
<dbReference type="GO" id="GO:0000981">
    <property type="term" value="F:DNA-binding transcription factor activity, RNA polymerase II-specific"/>
    <property type="evidence" value="ECO:0000250"/>
    <property type="project" value="UniProtKB"/>
</dbReference>
<dbReference type="GO" id="GO:0046983">
    <property type="term" value="F:protein dimerization activity"/>
    <property type="evidence" value="ECO:0007669"/>
    <property type="project" value="InterPro"/>
</dbReference>
<dbReference type="GO" id="GO:0000978">
    <property type="term" value="F:RNA polymerase II cis-regulatory region sequence-specific DNA binding"/>
    <property type="evidence" value="ECO:0000318"/>
    <property type="project" value="GO_Central"/>
</dbReference>
<dbReference type="GO" id="GO:0000977">
    <property type="term" value="F:RNA polymerase II transcription regulatory region sequence-specific DNA binding"/>
    <property type="evidence" value="ECO:0000250"/>
    <property type="project" value="UniProtKB"/>
</dbReference>
<dbReference type="GO" id="GO:0000976">
    <property type="term" value="F:transcription cis-regulatory region binding"/>
    <property type="evidence" value="ECO:0000250"/>
    <property type="project" value="UniProtKB"/>
</dbReference>
<dbReference type="GO" id="GO:0001782">
    <property type="term" value="P:B cell homeostasis"/>
    <property type="evidence" value="ECO:0000250"/>
    <property type="project" value="UniProtKB"/>
</dbReference>
<dbReference type="GO" id="GO:0042100">
    <property type="term" value="P:B cell proliferation"/>
    <property type="evidence" value="ECO:0000250"/>
    <property type="project" value="UniProtKB"/>
</dbReference>
<dbReference type="GO" id="GO:0050853">
    <property type="term" value="P:B cell receptor signaling pathway"/>
    <property type="evidence" value="ECO:0000250"/>
    <property type="project" value="UniProtKB"/>
</dbReference>
<dbReference type="GO" id="GO:0001568">
    <property type="term" value="P:blood vessel development"/>
    <property type="evidence" value="ECO:0000250"/>
    <property type="project" value="UniProtKB"/>
</dbReference>
<dbReference type="GO" id="GO:0001974">
    <property type="term" value="P:blood vessel remodeling"/>
    <property type="evidence" value="ECO:0000250"/>
    <property type="project" value="UniProtKB"/>
</dbReference>
<dbReference type="GO" id="GO:0003211">
    <property type="term" value="P:cardiac ventricle formation"/>
    <property type="evidence" value="ECO:0000250"/>
    <property type="project" value="UniProtKB"/>
</dbReference>
<dbReference type="GO" id="GO:0035051">
    <property type="term" value="P:cardiocyte differentiation"/>
    <property type="evidence" value="ECO:0000250"/>
    <property type="project" value="UniProtKB"/>
</dbReference>
<dbReference type="GO" id="GO:0071277">
    <property type="term" value="P:cellular response to calcium ion"/>
    <property type="evidence" value="ECO:0000250"/>
    <property type="project" value="UniProtKB"/>
</dbReference>
<dbReference type="GO" id="GO:0071498">
    <property type="term" value="P:cellular response to fluid shear stress"/>
    <property type="evidence" value="ECO:0000250"/>
    <property type="project" value="UniProtKB"/>
</dbReference>
<dbReference type="GO" id="GO:0071222">
    <property type="term" value="P:cellular response to lipopolysaccharide"/>
    <property type="evidence" value="ECO:0000250"/>
    <property type="project" value="UniProtKB"/>
</dbReference>
<dbReference type="GO" id="GO:0071374">
    <property type="term" value="P:cellular response to parathyroid hormone stimulus"/>
    <property type="evidence" value="ECO:0000250"/>
    <property type="project" value="UniProtKB"/>
</dbReference>
<dbReference type="GO" id="GO:0071560">
    <property type="term" value="P:cellular response to transforming growth factor beta stimulus"/>
    <property type="evidence" value="ECO:0000250"/>
    <property type="project" value="UniProtKB"/>
</dbReference>
<dbReference type="GO" id="GO:0035984">
    <property type="term" value="P:cellular response to trichostatin A"/>
    <property type="evidence" value="ECO:0000250"/>
    <property type="project" value="UniProtKB"/>
</dbReference>
<dbReference type="GO" id="GO:0071466">
    <property type="term" value="P:cellular response to xenobiotic stimulus"/>
    <property type="evidence" value="ECO:0000250"/>
    <property type="project" value="UniProtKB"/>
</dbReference>
<dbReference type="GO" id="GO:0002062">
    <property type="term" value="P:chondrocyte differentiation"/>
    <property type="evidence" value="ECO:0000250"/>
    <property type="project" value="UniProtKB"/>
</dbReference>
<dbReference type="GO" id="GO:0001958">
    <property type="term" value="P:endochondral ossification"/>
    <property type="evidence" value="ECO:0000250"/>
    <property type="project" value="UniProtKB"/>
</dbReference>
<dbReference type="GO" id="GO:2001013">
    <property type="term" value="P:epithelial cell proliferation involved in renal tubule morphogenesis"/>
    <property type="evidence" value="ECO:0000250"/>
    <property type="project" value="UniProtKB"/>
</dbReference>
<dbReference type="GO" id="GO:0002467">
    <property type="term" value="P:germinal center formation"/>
    <property type="evidence" value="ECO:0000250"/>
    <property type="project" value="UniProtKB"/>
</dbReference>
<dbReference type="GO" id="GO:0072102">
    <property type="term" value="P:glomerulus morphogenesis"/>
    <property type="evidence" value="ECO:0000250"/>
    <property type="project" value="UniProtKB"/>
</dbReference>
<dbReference type="GO" id="GO:0007507">
    <property type="term" value="P:heart development"/>
    <property type="evidence" value="ECO:0000250"/>
    <property type="project" value="UniProtKB"/>
</dbReference>
<dbReference type="GO" id="GO:0001947">
    <property type="term" value="P:heart looping"/>
    <property type="evidence" value="ECO:0000250"/>
    <property type="project" value="UniProtKB"/>
</dbReference>
<dbReference type="GO" id="GO:0006959">
    <property type="term" value="P:humoral immune response"/>
    <property type="evidence" value="ECO:0000250"/>
    <property type="project" value="UniProtKB"/>
</dbReference>
<dbReference type="GO" id="GO:0007611">
    <property type="term" value="P:learning or memory"/>
    <property type="evidence" value="ECO:0000250"/>
    <property type="project" value="UniProtKB"/>
</dbReference>
<dbReference type="GO" id="GO:0000165">
    <property type="term" value="P:MAPK cascade"/>
    <property type="evidence" value="ECO:0000250"/>
    <property type="project" value="UniProtKB"/>
</dbReference>
<dbReference type="GO" id="GO:0030318">
    <property type="term" value="P:melanocyte differentiation"/>
    <property type="evidence" value="ECO:0000250"/>
    <property type="project" value="UniProtKB"/>
</dbReference>
<dbReference type="GO" id="GO:0007521">
    <property type="term" value="P:muscle cell fate determination"/>
    <property type="evidence" value="ECO:0000250"/>
    <property type="project" value="UniProtKB"/>
</dbReference>
<dbReference type="GO" id="GO:0010629">
    <property type="term" value="P:negative regulation of gene expression"/>
    <property type="evidence" value="ECO:0000250"/>
    <property type="project" value="UniProtKB"/>
</dbReference>
<dbReference type="GO" id="GO:0043524">
    <property type="term" value="P:negative regulation of neuron apoptotic process"/>
    <property type="evidence" value="ECO:0000250"/>
    <property type="project" value="UniProtKB"/>
</dbReference>
<dbReference type="GO" id="GO:0030279">
    <property type="term" value="P:negative regulation of ossification"/>
    <property type="evidence" value="ECO:0000250"/>
    <property type="project" value="UniProtKB"/>
</dbReference>
<dbReference type="GO" id="GO:0000122">
    <property type="term" value="P:negative regulation of transcription by RNA polymerase II"/>
    <property type="evidence" value="ECO:0000250"/>
    <property type="project" value="UniProtKB"/>
</dbReference>
<dbReference type="GO" id="GO:0072160">
    <property type="term" value="P:nephron tubule epithelial cell differentiation"/>
    <property type="evidence" value="ECO:0000250"/>
    <property type="project" value="UniProtKB"/>
</dbReference>
<dbReference type="GO" id="GO:0014033">
    <property type="term" value="P:neural crest cell differentiation"/>
    <property type="evidence" value="ECO:0000250"/>
    <property type="project" value="UniProtKB"/>
</dbReference>
<dbReference type="GO" id="GO:0048666">
    <property type="term" value="P:neuron development"/>
    <property type="evidence" value="ECO:0000250"/>
    <property type="project" value="UniProtKB"/>
</dbReference>
<dbReference type="GO" id="GO:0030182">
    <property type="term" value="P:neuron differentiation"/>
    <property type="evidence" value="ECO:0000250"/>
    <property type="project" value="UniProtKB"/>
</dbReference>
<dbReference type="GO" id="GO:0001649">
    <property type="term" value="P:osteoblast differentiation"/>
    <property type="evidence" value="ECO:0000250"/>
    <property type="project" value="UniProtKB"/>
</dbReference>
<dbReference type="GO" id="GO:0003151">
    <property type="term" value="P:outflow tract morphogenesis"/>
    <property type="evidence" value="ECO:0000250"/>
    <property type="project" value="UniProtKB"/>
</dbReference>
<dbReference type="GO" id="GO:0030220">
    <property type="term" value="P:platelet formation"/>
    <property type="evidence" value="ECO:0000250"/>
    <property type="project" value="UniProtKB"/>
</dbReference>
<dbReference type="GO" id="GO:0030890">
    <property type="term" value="P:positive regulation of B cell proliferation"/>
    <property type="evidence" value="ECO:0000250"/>
    <property type="project" value="UniProtKB"/>
</dbReference>
<dbReference type="GO" id="GO:2000987">
    <property type="term" value="P:positive regulation of behavioral fear response"/>
    <property type="evidence" value="ECO:0000250"/>
    <property type="project" value="UniProtKB"/>
</dbReference>
<dbReference type="GO" id="GO:0030501">
    <property type="term" value="P:positive regulation of bone mineralization"/>
    <property type="evidence" value="ECO:0000250"/>
    <property type="project" value="UniProtKB"/>
</dbReference>
<dbReference type="GO" id="GO:2000727">
    <property type="term" value="P:positive regulation of cardiac muscle cell differentiation"/>
    <property type="evidence" value="ECO:0000250"/>
    <property type="project" value="UniProtKB"/>
</dbReference>
<dbReference type="GO" id="GO:0060045">
    <property type="term" value="P:positive regulation of cardiac muscle cell proliferation"/>
    <property type="evidence" value="ECO:0000250"/>
    <property type="project" value="UniProtKB"/>
</dbReference>
<dbReference type="GO" id="GO:0045893">
    <property type="term" value="P:positive regulation of DNA-templated transcription"/>
    <property type="evidence" value="ECO:0000250"/>
    <property type="project" value="UniProtKB"/>
</dbReference>
<dbReference type="GO" id="GO:0010628">
    <property type="term" value="P:positive regulation of gene expression"/>
    <property type="evidence" value="ECO:0000250"/>
    <property type="project" value="UniProtKB"/>
</dbReference>
<dbReference type="GO" id="GO:2000111">
    <property type="term" value="P:positive regulation of macrophage apoptotic process"/>
    <property type="evidence" value="ECO:0000250"/>
    <property type="project" value="UniProtKB"/>
</dbReference>
<dbReference type="GO" id="GO:0045663">
    <property type="term" value="P:positive regulation of myoblast differentiation"/>
    <property type="evidence" value="ECO:0000250"/>
    <property type="project" value="UniProtKB"/>
</dbReference>
<dbReference type="GO" id="GO:0045666">
    <property type="term" value="P:positive regulation of neuron differentiation"/>
    <property type="evidence" value="ECO:0000250"/>
    <property type="project" value="UniProtKB"/>
</dbReference>
<dbReference type="GO" id="GO:0045669">
    <property type="term" value="P:positive regulation of osteoblast differentiation"/>
    <property type="evidence" value="ECO:0000250"/>
    <property type="project" value="UniProtKB"/>
</dbReference>
<dbReference type="GO" id="GO:2001016">
    <property type="term" value="P:positive regulation of skeletal muscle cell differentiation"/>
    <property type="evidence" value="ECO:0000250"/>
    <property type="project" value="UniProtKB"/>
</dbReference>
<dbReference type="GO" id="GO:0048643">
    <property type="term" value="P:positive regulation of skeletal muscle tissue development"/>
    <property type="evidence" value="ECO:0000250"/>
    <property type="project" value="UniProtKB"/>
</dbReference>
<dbReference type="GO" id="GO:0045944">
    <property type="term" value="P:positive regulation of transcription by RNA polymerase II"/>
    <property type="evidence" value="ECO:0000250"/>
    <property type="project" value="UniProtKB"/>
</dbReference>
<dbReference type="GO" id="GO:0003138">
    <property type="term" value="P:primary heart field specification"/>
    <property type="evidence" value="ECO:0000250"/>
    <property type="project" value="UniProtKB"/>
</dbReference>
<dbReference type="GO" id="GO:0002634">
    <property type="term" value="P:regulation of germinal center formation"/>
    <property type="evidence" value="ECO:0000250"/>
    <property type="project" value="UniProtKB"/>
</dbReference>
<dbReference type="GO" id="GO:0045652">
    <property type="term" value="P:regulation of megakaryocyte differentiation"/>
    <property type="evidence" value="ECO:0000250"/>
    <property type="project" value="UniProtKB"/>
</dbReference>
<dbReference type="GO" id="GO:0060025">
    <property type="term" value="P:regulation of synaptic activity"/>
    <property type="evidence" value="ECO:0000250"/>
    <property type="project" value="UniProtKB"/>
</dbReference>
<dbReference type="GO" id="GO:0061333">
    <property type="term" value="P:renal tubule morphogenesis"/>
    <property type="evidence" value="ECO:0000250"/>
    <property type="project" value="UniProtKB"/>
</dbReference>
<dbReference type="GO" id="GO:0003139">
    <property type="term" value="P:secondary heart field specification"/>
    <property type="evidence" value="ECO:0000250"/>
    <property type="project" value="UniProtKB"/>
</dbReference>
<dbReference type="GO" id="GO:0003185">
    <property type="term" value="P:sinoatrial valve morphogenesis"/>
    <property type="evidence" value="ECO:0000250"/>
    <property type="project" value="UniProtKB"/>
</dbReference>
<dbReference type="GO" id="GO:0007519">
    <property type="term" value="P:skeletal muscle tissue development"/>
    <property type="evidence" value="ECO:0000250"/>
    <property type="project" value="UniProtKB"/>
</dbReference>
<dbReference type="GO" id="GO:0051145">
    <property type="term" value="P:smooth muscle cell differentiation"/>
    <property type="evidence" value="ECO:0000250"/>
    <property type="project" value="UniProtKB"/>
</dbReference>
<dbReference type="GO" id="GO:0055012">
    <property type="term" value="P:ventricular cardiac muscle cell differentiation"/>
    <property type="evidence" value="ECO:0000250"/>
    <property type="project" value="UniProtKB"/>
</dbReference>
<dbReference type="CDD" id="cd00265">
    <property type="entry name" value="MADS_MEF2_like"/>
    <property type="match status" value="1"/>
</dbReference>
<dbReference type="FunFam" id="3.40.1810.10:FF:000001">
    <property type="entry name" value="Myocyte-specific enhancer factor 2A homolog"/>
    <property type="match status" value="1"/>
</dbReference>
<dbReference type="Gene3D" id="3.40.1810.10">
    <property type="entry name" value="Transcription factor, MADS-box"/>
    <property type="match status" value="1"/>
</dbReference>
<dbReference type="InterPro" id="IPR022102">
    <property type="entry name" value="HJURP_C"/>
</dbReference>
<dbReference type="InterPro" id="IPR033896">
    <property type="entry name" value="MEF2-like_N"/>
</dbReference>
<dbReference type="InterPro" id="IPR002100">
    <property type="entry name" value="TF_MADSbox"/>
</dbReference>
<dbReference type="InterPro" id="IPR036879">
    <property type="entry name" value="TF_MADSbox_sf"/>
</dbReference>
<dbReference type="PANTHER" id="PTHR11945">
    <property type="entry name" value="MADS BOX PROTEIN"/>
    <property type="match status" value="1"/>
</dbReference>
<dbReference type="PANTHER" id="PTHR11945:SF637">
    <property type="entry name" value="MYOCYTE-SPECIFIC ENHANCER FACTOR 2A"/>
    <property type="match status" value="1"/>
</dbReference>
<dbReference type="Pfam" id="PF12347">
    <property type="entry name" value="HJURP_C"/>
    <property type="match status" value="1"/>
</dbReference>
<dbReference type="Pfam" id="PF00319">
    <property type="entry name" value="SRF-TF"/>
    <property type="match status" value="1"/>
</dbReference>
<dbReference type="PRINTS" id="PR00404">
    <property type="entry name" value="MADSDOMAIN"/>
</dbReference>
<dbReference type="SMART" id="SM00432">
    <property type="entry name" value="MADS"/>
    <property type="match status" value="1"/>
</dbReference>
<dbReference type="SUPFAM" id="SSF55455">
    <property type="entry name" value="SRF-like"/>
    <property type="match status" value="1"/>
</dbReference>
<dbReference type="PROSITE" id="PS00350">
    <property type="entry name" value="MADS_BOX_1"/>
    <property type="match status" value="1"/>
</dbReference>
<dbReference type="PROSITE" id="PS50066">
    <property type="entry name" value="MADS_BOX_2"/>
    <property type="match status" value="1"/>
</dbReference>
<protein>
    <recommendedName>
        <fullName evidence="9">Myocyte-specific enhancer factor 2C</fullName>
    </recommendedName>
</protein>
<name>MEF2C_PIG</name>
<feature type="chain" id="PRO_0000366973" description="Myocyte-specific enhancer factor 2C">
    <location>
        <begin position="1"/>
        <end position="463"/>
    </location>
</feature>
<feature type="domain" description="MADS-box" evidence="6">
    <location>
        <begin position="3"/>
        <end position="57"/>
    </location>
</feature>
<feature type="DNA-binding region" description="Mef2-type" evidence="5">
    <location>
        <begin position="58"/>
        <end position="86"/>
    </location>
</feature>
<feature type="region of interest" description="Disordered" evidence="7">
    <location>
        <begin position="178"/>
        <end position="223"/>
    </location>
</feature>
<feature type="region of interest" description="Transcription repressor" evidence="1">
    <location>
        <begin position="358"/>
        <end position="389"/>
    </location>
</feature>
<feature type="region of interest" description="Disordered" evidence="7">
    <location>
        <begin position="365"/>
        <end position="463"/>
    </location>
</feature>
<feature type="compositionally biased region" description="Polar residues" evidence="7">
    <location>
        <begin position="365"/>
        <end position="380"/>
    </location>
</feature>
<feature type="compositionally biased region" description="Low complexity" evidence="7">
    <location>
        <begin position="409"/>
        <end position="422"/>
    </location>
</feature>
<feature type="compositionally biased region" description="Basic and acidic residues" evidence="7">
    <location>
        <begin position="423"/>
        <end position="433"/>
    </location>
</feature>
<feature type="site" description="Cleavage" evidence="9">
    <location>
        <begin position="422"/>
        <end position="423"/>
    </location>
</feature>
<feature type="modified residue" description="N6-acetyllysine" evidence="4">
    <location>
        <position position="4"/>
    </location>
</feature>
<feature type="modified residue" description="Phosphoserine; by CK2" evidence="4">
    <location>
        <position position="59"/>
    </location>
</feature>
<feature type="modified residue" description="Phosphoserine" evidence="4">
    <location>
        <position position="98"/>
    </location>
</feature>
<feature type="modified residue" description="Phosphoserine" evidence="4">
    <location>
        <position position="104"/>
    </location>
</feature>
<feature type="modified residue" description="N6-acetyllysine" evidence="3">
    <location>
        <position position="114"/>
    </location>
</feature>
<feature type="modified residue" description="N6-acetyllysine" evidence="3">
    <location>
        <position position="117"/>
    </location>
</feature>
<feature type="modified residue" description="Phosphoserine" evidence="3">
    <location>
        <position position="220"/>
    </location>
</feature>
<feature type="modified residue" description="Phosphoserine" evidence="3">
    <location>
        <position position="226"/>
    </location>
</feature>
<feature type="modified residue" description="N6-acetyllysine" evidence="3">
    <location>
        <position position="232"/>
    </location>
</feature>
<feature type="modified residue" description="N6-acetyllysine" evidence="3">
    <location>
        <position position="237"/>
    </location>
</feature>
<feature type="modified residue" description="Phosphoserine" evidence="3">
    <location>
        <position position="238"/>
    </location>
</feature>
<feature type="modified residue" description="N6-acetyllysine" evidence="3">
    <location>
        <position position="250"/>
    </location>
</feature>
<feature type="modified residue" description="N6-acetyllysine" evidence="3">
    <location>
        <position position="262"/>
    </location>
</feature>
<feature type="modified residue" description="Phosphothreonine; by MAPK7 and MAPK14" evidence="3">
    <location>
        <position position="283"/>
    </location>
</feature>
<feature type="modified residue" description="Phosphothreonine; by MAPK7 and MAPK14" evidence="3">
    <location>
        <position position="290"/>
    </location>
</feature>
<feature type="modified residue" description="Phosphoserine; by CDK5" evidence="3">
    <location>
        <position position="386"/>
    </location>
</feature>
<feature type="modified residue" description="Phosphoserine; by MAPK7" evidence="3">
    <location>
        <position position="409"/>
    </location>
</feature>
<feature type="modified residue" description="Phosphoserine" evidence="3">
    <location>
        <position position="435"/>
    </location>
</feature>
<feature type="cross-link" description="Glycyl lysine isopeptide (Lys-Gly) (interchain with G-Cter in SUMO)" evidence="1">
    <location>
        <position position="381"/>
    </location>
</feature>
<feature type="splice variant" id="VSP_036600" description="In isoform 2." evidence="8">
    <original>ALNKKENKGCESPDPDSSYALTPRTEEKYKKINEEFDNMIKSHKIP</original>
    <variation>TLRKKGLNGCDSPDPDADDSVGHSPESEDKYRKINEDLDLMISRQRLC</variation>
    <location>
        <begin position="87"/>
        <end position="132"/>
    </location>
</feature>
<feature type="splice variant" id="VSP_036601" description="In isoform 2." evidence="8">
    <location>
        <begin position="358"/>
        <end position="389"/>
    </location>
</feature>
<feature type="sequence conflict" description="In Ref. 1; ABC68473." evidence="9" ref="1">
    <original>F</original>
    <variation>L</variation>
    <location>
        <position position="167"/>
    </location>
</feature>
<feature type="sequence conflict" description="In Ref. 1; ABC68473." evidence="9" ref="1">
    <original>S</original>
    <variation>N</variation>
    <location>
        <position position="269"/>
    </location>
</feature>
<gene>
    <name evidence="3" type="primary">MEF2C</name>
</gene>
<reference key="1">
    <citation type="submission" date="2007-03" db="EMBL/GenBank/DDBJ databases">
        <title>Molecular cloning and characterization of the porcine MEF2C gene.</title>
        <authorList>
            <person name="Liu M."/>
            <person name="Jiang S.W."/>
        </authorList>
    </citation>
    <scope>NUCLEOTIDE SEQUENCE [MRNA] (ISOFORMS 1 AND 2)</scope>
</reference>
<organism>
    <name type="scientific">Sus scrofa</name>
    <name type="common">Pig</name>
    <dbReference type="NCBI Taxonomy" id="9823"/>
    <lineage>
        <taxon>Eukaryota</taxon>
        <taxon>Metazoa</taxon>
        <taxon>Chordata</taxon>
        <taxon>Craniata</taxon>
        <taxon>Vertebrata</taxon>
        <taxon>Euteleostomi</taxon>
        <taxon>Mammalia</taxon>
        <taxon>Eutheria</taxon>
        <taxon>Laurasiatheria</taxon>
        <taxon>Artiodactyla</taxon>
        <taxon>Suina</taxon>
        <taxon>Suidae</taxon>
        <taxon>Sus</taxon>
    </lineage>
</organism>
<accession>A4UTP7</accession>
<accession>Q2L9Y8</accession>
<evidence type="ECO:0000250" key="1"/>
<evidence type="ECO:0000250" key="2">
    <source>
        <dbReference type="UniProtKB" id="A0A096MJY4"/>
    </source>
</evidence>
<evidence type="ECO:0000250" key="3">
    <source>
        <dbReference type="UniProtKB" id="Q06413"/>
    </source>
</evidence>
<evidence type="ECO:0000250" key="4">
    <source>
        <dbReference type="UniProtKB" id="Q8CFN5"/>
    </source>
</evidence>
<evidence type="ECO:0000255" key="5"/>
<evidence type="ECO:0000255" key="6">
    <source>
        <dbReference type="PROSITE-ProRule" id="PRU00251"/>
    </source>
</evidence>
<evidence type="ECO:0000256" key="7">
    <source>
        <dbReference type="SAM" id="MobiDB-lite"/>
    </source>
</evidence>
<evidence type="ECO:0000303" key="8">
    <source ref="1"/>
</evidence>
<evidence type="ECO:0000305" key="9"/>
<keyword id="KW-0007">Acetylation</keyword>
<keyword id="KW-0010">Activator</keyword>
<keyword id="KW-0025">Alternative splicing</keyword>
<keyword id="KW-0963">Cytoplasm</keyword>
<keyword id="KW-0217">Developmental protein</keyword>
<keyword id="KW-0221">Differentiation</keyword>
<keyword id="KW-0238">DNA-binding</keyword>
<keyword id="KW-1017">Isopeptide bond</keyword>
<keyword id="KW-0539">Nucleus</keyword>
<keyword id="KW-0597">Phosphoprotein</keyword>
<keyword id="KW-1185">Reference proteome</keyword>
<keyword id="KW-0804">Transcription</keyword>
<keyword id="KW-0805">Transcription regulation</keyword>
<keyword id="KW-0832">Ubl conjugation</keyword>
<comment type="function">
    <text evidence="3 4">Transcription activator which binds specifically to the MEF2 element present in the regulatory regions of many muscle-specific genes. Controls cardiac morphogenesis and myogenesis, and is also involved in vascular development. Enhances transcriptional activation mediated by SOX18. Plays an essential role in hippocampal-dependent learning and memory by suppressing the number of excitatory synapses and thus regulating basal and evoked synaptic transmission. Crucial for normal neuronal development, distribution, and electrical activity in the neocortex. Necessary for proper development of megakaryocytes and platelets and for bone marrow B-lymphopoiesis. Required for B-cell survival and proliferation in response to BCR stimulation, efficient IgG1 antibody responses to T-cell-dependent antigens and for normal induction of germinal center B-cells. May also be involved in neurogenesis and in the development of cortical architecture (By similarity).</text>
</comment>
<comment type="subunit">
    <text evidence="2 3 4">Forms a complex with class II HDACs in undifferentiating cells. On myogenic differentiation, HDACs are released into the cytoplasm allowing MEF2s to interact with other proteins for activation. Interacts with EP300 in differentiating cells; the interaction acetylates MEF2C leading to increased DNA binding and activation (By similarity). Interacts with HDAC7 and CARM1 (By similarity). Interacts with HDAC4, HDAC7 and HDAC9; the interaction with HDACs represses transcriptional activity (By similarity). Interacts with LPIN1. Interacts with MYOCD. Interacts with AKAP13. Interacts with FOXK1; the interaction inhibits MEF2C transactivation activity (By similarity). Interacts (via N-terminus) with HABP4; this interaction decreases DNA-binding activity of MEF2C in myocardial cells in response to mechanical stress (By similarity). Interacts with JPH2; interaction specifically takes place with the Junctophilin-2 N-terminal fragment cleavage product of JPH2 (By similarity). Interacts (via MADS box) with SOX18 (By similarity). Interacts with PHF7; the interaction promotes MEF2C binding to its transcription targets (By similarity).</text>
</comment>
<comment type="subcellular location">
    <subcellularLocation>
        <location evidence="2">Nucleus</location>
    </subcellularLocation>
    <subcellularLocation>
        <location evidence="2">Cytoplasm</location>
        <location evidence="2">Sarcoplasm</location>
    </subcellularLocation>
</comment>
<comment type="alternative products">
    <event type="alternative splicing"/>
    <isoform>
        <id>A4UTP7-1</id>
        <name>1</name>
        <sequence type="displayed"/>
    </isoform>
    <isoform>
        <id>A4UTP7-2</id>
        <name>2</name>
        <sequence type="described" ref="VSP_036600 VSP_036601"/>
    </isoform>
</comment>
<comment type="domain">
    <text evidence="1">The beta domain is required for enhancement of transcriptional activity.</text>
</comment>
<comment type="PTM">
    <text evidence="1">Phosphorylated on Ser-59; which enhances DNA binding activity. Phosphorylated on Ser-386; which is required for Lys-381 sumoylation and inhibits transcriptional activity.</text>
</comment>
<comment type="PTM">
    <text evidence="1">Acetylated by p300 on several sites in diffentiating myocytes. Acetylation on Lys-4 increases DNA binding and transactivation (By similarity).</text>
</comment>
<comment type="PTM">
    <text evidence="1">Sumoylated on Lys-381 with SUMO2 but not SUMO1; which represses transcriptional activity.</text>
</comment>
<comment type="PTM">
    <text evidence="1">Proteolytically cleaved in cerebellar granule neurons on several sites by caspase 3 and caspase 7 following neurotoxicity. Preferentially cleaves the CDK5-mediated hyperphosphorylated form which leads to neuron apoptosis and transcriptional inactivation (By similarity).</text>
</comment>
<proteinExistence type="evidence at transcript level"/>